<name>PHNC_STAAC</name>
<proteinExistence type="inferred from homology"/>
<dbReference type="EC" id="7.3.2.2" evidence="1"/>
<dbReference type="EMBL" id="CP000046">
    <property type="protein sequence ID" value="AAW37428.1"/>
    <property type="molecule type" value="Genomic_DNA"/>
</dbReference>
<dbReference type="RefSeq" id="WP_000078092.1">
    <property type="nucleotide sequence ID" value="NZ_JBGOFO010000001.1"/>
</dbReference>
<dbReference type="SMR" id="Q5HJM6"/>
<dbReference type="KEGG" id="sac:SACOL0127"/>
<dbReference type="HOGENOM" id="CLU_000604_1_22_9"/>
<dbReference type="Proteomes" id="UP000000530">
    <property type="component" value="Chromosome"/>
</dbReference>
<dbReference type="GO" id="GO:0005886">
    <property type="term" value="C:plasma membrane"/>
    <property type="evidence" value="ECO:0007669"/>
    <property type="project" value="UniProtKB-SubCell"/>
</dbReference>
<dbReference type="GO" id="GO:0015416">
    <property type="term" value="F:ABC-type phosphonate transporter activity"/>
    <property type="evidence" value="ECO:0007669"/>
    <property type="project" value="UniProtKB-EC"/>
</dbReference>
<dbReference type="GO" id="GO:0005524">
    <property type="term" value="F:ATP binding"/>
    <property type="evidence" value="ECO:0007669"/>
    <property type="project" value="UniProtKB-KW"/>
</dbReference>
<dbReference type="GO" id="GO:0016887">
    <property type="term" value="F:ATP hydrolysis activity"/>
    <property type="evidence" value="ECO:0007669"/>
    <property type="project" value="InterPro"/>
</dbReference>
<dbReference type="CDD" id="cd03256">
    <property type="entry name" value="ABC_PhnC_transporter"/>
    <property type="match status" value="1"/>
</dbReference>
<dbReference type="Gene3D" id="3.40.50.300">
    <property type="entry name" value="P-loop containing nucleotide triphosphate hydrolases"/>
    <property type="match status" value="1"/>
</dbReference>
<dbReference type="InterPro" id="IPR003593">
    <property type="entry name" value="AAA+_ATPase"/>
</dbReference>
<dbReference type="InterPro" id="IPR003439">
    <property type="entry name" value="ABC_transporter-like_ATP-bd"/>
</dbReference>
<dbReference type="InterPro" id="IPR017871">
    <property type="entry name" value="ABC_transporter-like_CS"/>
</dbReference>
<dbReference type="InterPro" id="IPR012693">
    <property type="entry name" value="ABC_transpr_PhnC"/>
</dbReference>
<dbReference type="InterPro" id="IPR050086">
    <property type="entry name" value="MetN_ABC_transporter-like"/>
</dbReference>
<dbReference type="InterPro" id="IPR027417">
    <property type="entry name" value="P-loop_NTPase"/>
</dbReference>
<dbReference type="NCBIfam" id="TIGR02315">
    <property type="entry name" value="ABC_phnC"/>
    <property type="match status" value="1"/>
</dbReference>
<dbReference type="PANTHER" id="PTHR43166">
    <property type="entry name" value="AMINO ACID IMPORT ATP-BINDING PROTEIN"/>
    <property type="match status" value="1"/>
</dbReference>
<dbReference type="PANTHER" id="PTHR43166:SF6">
    <property type="entry name" value="PHOSPHONATES IMPORT ATP-BINDING PROTEIN PHNC"/>
    <property type="match status" value="1"/>
</dbReference>
<dbReference type="Pfam" id="PF00005">
    <property type="entry name" value="ABC_tran"/>
    <property type="match status" value="1"/>
</dbReference>
<dbReference type="SMART" id="SM00382">
    <property type="entry name" value="AAA"/>
    <property type="match status" value="1"/>
</dbReference>
<dbReference type="SUPFAM" id="SSF52540">
    <property type="entry name" value="P-loop containing nucleoside triphosphate hydrolases"/>
    <property type="match status" value="1"/>
</dbReference>
<dbReference type="PROSITE" id="PS00211">
    <property type="entry name" value="ABC_TRANSPORTER_1"/>
    <property type="match status" value="1"/>
</dbReference>
<dbReference type="PROSITE" id="PS50893">
    <property type="entry name" value="ABC_TRANSPORTER_2"/>
    <property type="match status" value="1"/>
</dbReference>
<dbReference type="PROSITE" id="PS51249">
    <property type="entry name" value="PHNC"/>
    <property type="match status" value="1"/>
</dbReference>
<comment type="function">
    <text evidence="1">Part of the ABC transporter complex PhnCDE involved in phosphonates import. Responsible for energy coupling to the transport system.</text>
</comment>
<comment type="catalytic activity">
    <reaction evidence="1">
        <text>phosphonate(out) + ATP + H2O = phosphonate(in) + ADP + phosphate + H(+)</text>
        <dbReference type="Rhea" id="RHEA:18065"/>
        <dbReference type="ChEBI" id="CHEBI:15377"/>
        <dbReference type="ChEBI" id="CHEBI:15378"/>
        <dbReference type="ChEBI" id="CHEBI:16215"/>
        <dbReference type="ChEBI" id="CHEBI:30616"/>
        <dbReference type="ChEBI" id="CHEBI:43474"/>
        <dbReference type="ChEBI" id="CHEBI:456216"/>
        <dbReference type="EC" id="7.3.2.2"/>
    </reaction>
</comment>
<comment type="subunit">
    <text evidence="1">The complex is composed of two ATP-binding proteins (PhnC), two transmembrane proteins (PhnE) and a solute-binding protein (PhnD).</text>
</comment>
<comment type="subcellular location">
    <subcellularLocation>
        <location evidence="1">Cell membrane</location>
        <topology evidence="1">Peripheral membrane protein</topology>
    </subcellularLocation>
</comment>
<comment type="similarity">
    <text evidence="1">Belongs to the ABC transporter superfamily. Phosphonates importer (TC 3.A.1.9.1) family.</text>
</comment>
<keyword id="KW-0067">ATP-binding</keyword>
<keyword id="KW-1003">Cell membrane</keyword>
<keyword id="KW-0472">Membrane</keyword>
<keyword id="KW-0547">Nucleotide-binding</keyword>
<keyword id="KW-0918">Phosphonate transport</keyword>
<keyword id="KW-1278">Translocase</keyword>
<keyword id="KW-0813">Transport</keyword>
<gene>
    <name evidence="1" type="primary">phnC</name>
    <name type="ordered locus">SACOL0127</name>
</gene>
<evidence type="ECO:0000255" key="1">
    <source>
        <dbReference type="HAMAP-Rule" id="MF_01713"/>
    </source>
</evidence>
<organism>
    <name type="scientific">Staphylococcus aureus (strain COL)</name>
    <dbReference type="NCBI Taxonomy" id="93062"/>
    <lineage>
        <taxon>Bacteria</taxon>
        <taxon>Bacillati</taxon>
        <taxon>Bacillota</taxon>
        <taxon>Bacilli</taxon>
        <taxon>Bacillales</taxon>
        <taxon>Staphylococcaceae</taxon>
        <taxon>Staphylococcus</taxon>
    </lineage>
</organism>
<protein>
    <recommendedName>
        <fullName evidence="1">Phosphonates import ATP-binding protein PhnC</fullName>
        <ecNumber evidence="1">7.3.2.2</ecNumber>
    </recommendedName>
</protein>
<reference key="1">
    <citation type="journal article" date="2005" name="J. Bacteriol.">
        <title>Insights on evolution of virulence and resistance from the complete genome analysis of an early methicillin-resistant Staphylococcus aureus strain and a biofilm-producing methicillin-resistant Staphylococcus epidermidis strain.</title>
        <authorList>
            <person name="Gill S.R."/>
            <person name="Fouts D.E."/>
            <person name="Archer G.L."/>
            <person name="Mongodin E.F."/>
            <person name="DeBoy R.T."/>
            <person name="Ravel J."/>
            <person name="Paulsen I.T."/>
            <person name="Kolonay J.F."/>
            <person name="Brinkac L.M."/>
            <person name="Beanan M.J."/>
            <person name="Dodson R.J."/>
            <person name="Daugherty S.C."/>
            <person name="Madupu R."/>
            <person name="Angiuoli S.V."/>
            <person name="Durkin A.S."/>
            <person name="Haft D.H."/>
            <person name="Vamathevan J.J."/>
            <person name="Khouri H."/>
            <person name="Utterback T.R."/>
            <person name="Lee C."/>
            <person name="Dimitrov G."/>
            <person name="Jiang L."/>
            <person name="Qin H."/>
            <person name="Weidman J."/>
            <person name="Tran K."/>
            <person name="Kang K.H."/>
            <person name="Hance I.R."/>
            <person name="Nelson K.E."/>
            <person name="Fraser C.M."/>
        </authorList>
    </citation>
    <scope>NUCLEOTIDE SEQUENCE [LARGE SCALE GENOMIC DNA]</scope>
    <source>
        <strain>COL</strain>
    </source>
</reference>
<accession>Q5HJM6</accession>
<feature type="chain" id="PRO_0000092729" description="Phosphonates import ATP-binding protein PhnC">
    <location>
        <begin position="1"/>
        <end position="257"/>
    </location>
</feature>
<feature type="domain" description="ABC transporter" evidence="1">
    <location>
        <begin position="4"/>
        <end position="248"/>
    </location>
</feature>
<feature type="binding site" evidence="1">
    <location>
        <begin position="37"/>
        <end position="44"/>
    </location>
    <ligand>
        <name>ATP</name>
        <dbReference type="ChEBI" id="CHEBI:30616"/>
    </ligand>
</feature>
<sequence>MSQIEFKNVSKVYPNGHVGLKNINLNIEKGEFAVIVGLSGAGKSTLLRSVNRLHDITSGEIFIQGKSITKAHGKALLEMRRNIGMIFQHFNLVKRSSVLRNVLSGRVGYHPTWKMVLGLFPKEDKIKAMDALERVNILDKYNQRSDELSGGQQQRISIARALCQESEIILADEPVASLDPLTTKQVMDDLRKINQELGITILINLHFVDLAKEYGTRIIGLRDGEVVYDGPASEATDDVFSEIYGRTIKEDEKLGVN</sequence>